<proteinExistence type="inferred from homology"/>
<name>HIS7_BACP2</name>
<feature type="chain" id="PRO_1000057517" description="Imidazoleglycerol-phosphate dehydratase">
    <location>
        <begin position="1"/>
        <end position="194"/>
    </location>
</feature>
<gene>
    <name evidence="1" type="primary">hisB</name>
    <name type="ordered locus">BPUM_3125</name>
</gene>
<dbReference type="EC" id="4.2.1.19" evidence="1"/>
<dbReference type="EMBL" id="CP000813">
    <property type="protein sequence ID" value="ABV63779.1"/>
    <property type="molecule type" value="Genomic_DNA"/>
</dbReference>
<dbReference type="RefSeq" id="WP_012011368.1">
    <property type="nucleotide sequence ID" value="NZ_VEIS01000009.1"/>
</dbReference>
<dbReference type="SMR" id="A8FHR2"/>
<dbReference type="STRING" id="315750.BPUM_3125"/>
<dbReference type="GeneID" id="5622416"/>
<dbReference type="KEGG" id="bpu:BPUM_3125"/>
<dbReference type="eggNOG" id="COG0131">
    <property type="taxonomic scope" value="Bacteria"/>
</dbReference>
<dbReference type="HOGENOM" id="CLU_044308_2_0_9"/>
<dbReference type="OrthoDB" id="9790411at2"/>
<dbReference type="UniPathway" id="UPA00031">
    <property type="reaction ID" value="UER00011"/>
</dbReference>
<dbReference type="Proteomes" id="UP000001355">
    <property type="component" value="Chromosome"/>
</dbReference>
<dbReference type="GO" id="GO:0005737">
    <property type="term" value="C:cytoplasm"/>
    <property type="evidence" value="ECO:0007669"/>
    <property type="project" value="UniProtKB-SubCell"/>
</dbReference>
<dbReference type="GO" id="GO:0004424">
    <property type="term" value="F:imidazoleglycerol-phosphate dehydratase activity"/>
    <property type="evidence" value="ECO:0007669"/>
    <property type="project" value="UniProtKB-UniRule"/>
</dbReference>
<dbReference type="GO" id="GO:0000105">
    <property type="term" value="P:L-histidine biosynthetic process"/>
    <property type="evidence" value="ECO:0007669"/>
    <property type="project" value="UniProtKB-UniRule"/>
</dbReference>
<dbReference type="CDD" id="cd07914">
    <property type="entry name" value="IGPD"/>
    <property type="match status" value="1"/>
</dbReference>
<dbReference type="FunFam" id="3.30.230.40:FF:000001">
    <property type="entry name" value="Imidazoleglycerol-phosphate dehydratase HisB"/>
    <property type="match status" value="1"/>
</dbReference>
<dbReference type="FunFam" id="3.30.230.40:FF:000003">
    <property type="entry name" value="Imidazoleglycerol-phosphate dehydratase HisB"/>
    <property type="match status" value="1"/>
</dbReference>
<dbReference type="Gene3D" id="3.30.230.40">
    <property type="entry name" value="Imidazole glycerol phosphate dehydratase, domain 1"/>
    <property type="match status" value="2"/>
</dbReference>
<dbReference type="HAMAP" id="MF_00076">
    <property type="entry name" value="HisB"/>
    <property type="match status" value="1"/>
</dbReference>
<dbReference type="InterPro" id="IPR038494">
    <property type="entry name" value="IGPD_sf"/>
</dbReference>
<dbReference type="InterPro" id="IPR000807">
    <property type="entry name" value="ImidazoleglycerolP_deHydtase"/>
</dbReference>
<dbReference type="InterPro" id="IPR020565">
    <property type="entry name" value="ImidazoleglycerP_deHydtase_CS"/>
</dbReference>
<dbReference type="InterPro" id="IPR020568">
    <property type="entry name" value="Ribosomal_Su5_D2-typ_SF"/>
</dbReference>
<dbReference type="NCBIfam" id="NF002107">
    <property type="entry name" value="PRK00951.1-2"/>
    <property type="match status" value="1"/>
</dbReference>
<dbReference type="NCBIfam" id="NF002111">
    <property type="entry name" value="PRK00951.2-1"/>
    <property type="match status" value="1"/>
</dbReference>
<dbReference type="NCBIfam" id="NF002114">
    <property type="entry name" value="PRK00951.2-4"/>
    <property type="match status" value="1"/>
</dbReference>
<dbReference type="NCBIfam" id="NF002115">
    <property type="entry name" value="PRK00951.2-5"/>
    <property type="match status" value="1"/>
</dbReference>
<dbReference type="PANTHER" id="PTHR23133:SF2">
    <property type="entry name" value="IMIDAZOLEGLYCEROL-PHOSPHATE DEHYDRATASE"/>
    <property type="match status" value="1"/>
</dbReference>
<dbReference type="PANTHER" id="PTHR23133">
    <property type="entry name" value="IMIDAZOLEGLYCEROL-PHOSPHATE DEHYDRATASE HIS7"/>
    <property type="match status" value="1"/>
</dbReference>
<dbReference type="Pfam" id="PF00475">
    <property type="entry name" value="IGPD"/>
    <property type="match status" value="1"/>
</dbReference>
<dbReference type="SUPFAM" id="SSF54211">
    <property type="entry name" value="Ribosomal protein S5 domain 2-like"/>
    <property type="match status" value="2"/>
</dbReference>
<dbReference type="PROSITE" id="PS00954">
    <property type="entry name" value="IGP_DEHYDRATASE_1"/>
    <property type="match status" value="1"/>
</dbReference>
<dbReference type="PROSITE" id="PS00955">
    <property type="entry name" value="IGP_DEHYDRATASE_2"/>
    <property type="match status" value="1"/>
</dbReference>
<keyword id="KW-0028">Amino-acid biosynthesis</keyword>
<keyword id="KW-0963">Cytoplasm</keyword>
<keyword id="KW-0368">Histidine biosynthesis</keyword>
<keyword id="KW-0456">Lyase</keyword>
<evidence type="ECO:0000255" key="1">
    <source>
        <dbReference type="HAMAP-Rule" id="MF_00076"/>
    </source>
</evidence>
<comment type="catalytic activity">
    <reaction evidence="1">
        <text>D-erythro-1-(imidazol-4-yl)glycerol 3-phosphate = 3-(imidazol-4-yl)-2-oxopropyl phosphate + H2O</text>
        <dbReference type="Rhea" id="RHEA:11040"/>
        <dbReference type="ChEBI" id="CHEBI:15377"/>
        <dbReference type="ChEBI" id="CHEBI:57766"/>
        <dbReference type="ChEBI" id="CHEBI:58278"/>
        <dbReference type="EC" id="4.2.1.19"/>
    </reaction>
</comment>
<comment type="pathway">
    <text evidence="1">Amino-acid biosynthesis; L-histidine biosynthesis; L-histidine from 5-phospho-alpha-D-ribose 1-diphosphate: step 6/9.</text>
</comment>
<comment type="subcellular location">
    <subcellularLocation>
        <location evidence="1">Cytoplasm</location>
    </subcellularLocation>
</comment>
<comment type="similarity">
    <text evidence="1">Belongs to the imidazoleglycerol-phosphate dehydratase family.</text>
</comment>
<sequence length="194" mass="21744">MRQAETARKTNETNISLTLEIDGEGKADIQTDVPFMTHMLDLFTKHGHFNLTVDAKGDTDVDDHHTTEDIGIVLGQMFKEALGDKKGIKRYGSSFVPMDETLAQVVVDLSNRPHLEMRAAFPSQKVGTFDTELVHEFLWKFALEARINLHVIVHYGTNTHHMIEAIFKAMARALDEATTIDPRVKGIPSTKGML</sequence>
<protein>
    <recommendedName>
        <fullName evidence="1">Imidazoleglycerol-phosphate dehydratase</fullName>
        <shortName evidence="1">IGPD</shortName>
        <ecNumber evidence="1">4.2.1.19</ecNumber>
    </recommendedName>
</protein>
<reference key="1">
    <citation type="journal article" date="2007" name="PLoS ONE">
        <title>Paradoxical DNA repair and peroxide resistance gene conservation in Bacillus pumilus SAFR-032.</title>
        <authorList>
            <person name="Gioia J."/>
            <person name="Yerrapragada S."/>
            <person name="Qin X."/>
            <person name="Jiang H."/>
            <person name="Igboeli O.C."/>
            <person name="Muzny D."/>
            <person name="Dugan-Rocha S."/>
            <person name="Ding Y."/>
            <person name="Hawes A."/>
            <person name="Liu W."/>
            <person name="Perez L."/>
            <person name="Kovar C."/>
            <person name="Dinh H."/>
            <person name="Lee S."/>
            <person name="Nazareth L."/>
            <person name="Blyth P."/>
            <person name="Holder M."/>
            <person name="Buhay C."/>
            <person name="Tirumalai M.R."/>
            <person name="Liu Y."/>
            <person name="Dasgupta I."/>
            <person name="Bokhetache L."/>
            <person name="Fujita M."/>
            <person name="Karouia F."/>
            <person name="Eswara Moorthy P."/>
            <person name="Siefert J."/>
            <person name="Uzman A."/>
            <person name="Buzumbo P."/>
            <person name="Verma A."/>
            <person name="Zwiya H."/>
            <person name="McWilliams B.D."/>
            <person name="Olowu A."/>
            <person name="Clinkenbeard K.D."/>
            <person name="Newcombe D."/>
            <person name="Golebiewski L."/>
            <person name="Petrosino J.F."/>
            <person name="Nicholson W.L."/>
            <person name="Fox G.E."/>
            <person name="Venkateswaran K."/>
            <person name="Highlander S.K."/>
            <person name="Weinstock G.M."/>
        </authorList>
    </citation>
    <scope>NUCLEOTIDE SEQUENCE [LARGE SCALE GENOMIC DNA]</scope>
    <source>
        <strain>SAFR-032</strain>
    </source>
</reference>
<organism>
    <name type="scientific">Bacillus pumilus (strain SAFR-032)</name>
    <dbReference type="NCBI Taxonomy" id="315750"/>
    <lineage>
        <taxon>Bacteria</taxon>
        <taxon>Bacillati</taxon>
        <taxon>Bacillota</taxon>
        <taxon>Bacilli</taxon>
        <taxon>Bacillales</taxon>
        <taxon>Bacillaceae</taxon>
        <taxon>Bacillus</taxon>
    </lineage>
</organism>
<accession>A8FHR2</accession>